<reference key="1">
    <citation type="journal article" date="2001" name="Nature">
        <title>Genome sequence of enterohaemorrhagic Escherichia coli O157:H7.</title>
        <authorList>
            <person name="Perna N.T."/>
            <person name="Plunkett G. III"/>
            <person name="Burland V."/>
            <person name="Mau B."/>
            <person name="Glasner J.D."/>
            <person name="Rose D.J."/>
            <person name="Mayhew G.F."/>
            <person name="Evans P.S."/>
            <person name="Gregor J."/>
            <person name="Kirkpatrick H.A."/>
            <person name="Posfai G."/>
            <person name="Hackett J."/>
            <person name="Klink S."/>
            <person name="Boutin A."/>
            <person name="Shao Y."/>
            <person name="Miller L."/>
            <person name="Grotbeck E.J."/>
            <person name="Davis N.W."/>
            <person name="Lim A."/>
            <person name="Dimalanta E.T."/>
            <person name="Potamousis K."/>
            <person name="Apodaca J."/>
            <person name="Anantharaman T.S."/>
            <person name="Lin J."/>
            <person name="Yen G."/>
            <person name="Schwartz D.C."/>
            <person name="Welch R.A."/>
            <person name="Blattner F.R."/>
        </authorList>
    </citation>
    <scope>NUCLEOTIDE SEQUENCE [LARGE SCALE GENOMIC DNA]</scope>
    <source>
        <strain>O157:H7 / EDL933 / ATCC 700927 / EHEC</strain>
    </source>
</reference>
<reference key="2">
    <citation type="journal article" date="2001" name="DNA Res.">
        <title>Complete genome sequence of enterohemorrhagic Escherichia coli O157:H7 and genomic comparison with a laboratory strain K-12.</title>
        <authorList>
            <person name="Hayashi T."/>
            <person name="Makino K."/>
            <person name="Ohnishi M."/>
            <person name="Kurokawa K."/>
            <person name="Ishii K."/>
            <person name="Yokoyama K."/>
            <person name="Han C.-G."/>
            <person name="Ohtsubo E."/>
            <person name="Nakayama K."/>
            <person name="Murata T."/>
            <person name="Tanaka M."/>
            <person name="Tobe T."/>
            <person name="Iida T."/>
            <person name="Takami H."/>
            <person name="Honda T."/>
            <person name="Sasakawa C."/>
            <person name="Ogasawara N."/>
            <person name="Yasunaga T."/>
            <person name="Kuhara S."/>
            <person name="Shiba T."/>
            <person name="Hattori M."/>
            <person name="Shinagawa H."/>
        </authorList>
    </citation>
    <scope>NUCLEOTIDE SEQUENCE [LARGE SCALE GENOMIC DNA]</scope>
    <source>
        <strain>O157:H7 / Sakai / RIMD 0509952 / EHEC</strain>
    </source>
</reference>
<dbReference type="EMBL" id="AE005174">
    <property type="protein sequence ID" value="AAG59114.1"/>
    <property type="molecule type" value="Genomic_DNA"/>
</dbReference>
<dbReference type="EMBL" id="BA000007">
    <property type="protein sequence ID" value="BAB38269.1"/>
    <property type="molecule type" value="Genomic_DNA"/>
</dbReference>
<dbReference type="PIR" id="F86081">
    <property type="entry name" value="F86081"/>
</dbReference>
<dbReference type="PIR" id="F91234">
    <property type="entry name" value="F91234"/>
</dbReference>
<dbReference type="RefSeq" id="NP_312873.1">
    <property type="nucleotide sequence ID" value="NC_002695.1"/>
</dbReference>
<dbReference type="RefSeq" id="WP_000155257.1">
    <property type="nucleotide sequence ID" value="NZ_VOAI01000016.1"/>
</dbReference>
<dbReference type="STRING" id="155864.Z5466"/>
<dbReference type="GeneID" id="915056"/>
<dbReference type="KEGG" id="ece:Z5466"/>
<dbReference type="KEGG" id="ecs:ECs_4846"/>
<dbReference type="PATRIC" id="fig|386585.9.peg.5068"/>
<dbReference type="eggNOG" id="COG3152">
    <property type="taxonomic scope" value="Bacteria"/>
</dbReference>
<dbReference type="HOGENOM" id="CLU_093674_6_0_6"/>
<dbReference type="OMA" id="RDFWIWM"/>
<dbReference type="Proteomes" id="UP000000558">
    <property type="component" value="Chromosome"/>
</dbReference>
<dbReference type="Proteomes" id="UP000002519">
    <property type="component" value="Chromosome"/>
</dbReference>
<dbReference type="GO" id="GO:0005886">
    <property type="term" value="C:plasma membrane"/>
    <property type="evidence" value="ECO:0007669"/>
    <property type="project" value="TreeGrafter"/>
</dbReference>
<dbReference type="InterPro" id="IPR008523">
    <property type="entry name" value="DUF805"/>
</dbReference>
<dbReference type="PANTHER" id="PTHR34980:SF1">
    <property type="entry name" value="INNER MEMBRANE PROTEIN"/>
    <property type="match status" value="1"/>
</dbReference>
<dbReference type="PANTHER" id="PTHR34980">
    <property type="entry name" value="INNER MEMBRANE PROTEIN-RELATED-RELATED"/>
    <property type="match status" value="1"/>
</dbReference>
<dbReference type="Pfam" id="PF05656">
    <property type="entry name" value="DUF805"/>
    <property type="match status" value="1"/>
</dbReference>
<name>YIIR_ECO57</name>
<accession>P0AF35</accession>
<accession>P32161</accession>
<feature type="chain" id="PRO_0000169691" description="Uncharacterized protein YiiR">
    <location>
        <begin position="1"/>
        <end position="146"/>
    </location>
</feature>
<keyword id="KW-1185">Reference proteome</keyword>
<sequence length="146" mass="16542">MTIQQWLFSFKGRIGRRDFWIWIGLWFAGMLVLFSLAGKNLLDIQTAAFCLVCLLWPTAAVTVKRLHDRGRSGAWAFLMIVAWMLLAGNWAILPGVWQWAVGRFVPTLILVMMLIDLGAFVGTQGENKYGKDTQDVKYKADNKSSN</sequence>
<proteinExistence type="predicted"/>
<gene>
    <name type="primary">yiiR</name>
    <name type="ordered locus">Z5466</name>
    <name type="ordered locus">ECs4846</name>
</gene>
<protein>
    <recommendedName>
        <fullName>Uncharacterized protein YiiR</fullName>
    </recommendedName>
</protein>
<organism>
    <name type="scientific">Escherichia coli O157:H7</name>
    <dbReference type="NCBI Taxonomy" id="83334"/>
    <lineage>
        <taxon>Bacteria</taxon>
        <taxon>Pseudomonadati</taxon>
        <taxon>Pseudomonadota</taxon>
        <taxon>Gammaproteobacteria</taxon>
        <taxon>Enterobacterales</taxon>
        <taxon>Enterobacteriaceae</taxon>
        <taxon>Escherichia</taxon>
    </lineage>
</organism>